<dbReference type="EC" id="2.7.4.22" evidence="1"/>
<dbReference type="EMBL" id="AM421808">
    <property type="protein sequence ID" value="CAM11235.1"/>
    <property type="molecule type" value="Genomic_DNA"/>
</dbReference>
<dbReference type="RefSeq" id="WP_002219983.1">
    <property type="nucleotide sequence ID" value="NC_008767.1"/>
</dbReference>
<dbReference type="SMR" id="A1KWH8"/>
<dbReference type="KEGG" id="nmc:NMC2082"/>
<dbReference type="HOGENOM" id="CLU_033861_0_0_4"/>
<dbReference type="UniPathway" id="UPA00159">
    <property type="reaction ID" value="UER00275"/>
</dbReference>
<dbReference type="Proteomes" id="UP000002286">
    <property type="component" value="Chromosome"/>
</dbReference>
<dbReference type="GO" id="GO:0005829">
    <property type="term" value="C:cytosol"/>
    <property type="evidence" value="ECO:0007669"/>
    <property type="project" value="TreeGrafter"/>
</dbReference>
<dbReference type="GO" id="GO:0005524">
    <property type="term" value="F:ATP binding"/>
    <property type="evidence" value="ECO:0007669"/>
    <property type="project" value="UniProtKB-KW"/>
</dbReference>
<dbReference type="GO" id="GO:0033862">
    <property type="term" value="F:UMP kinase activity"/>
    <property type="evidence" value="ECO:0007669"/>
    <property type="project" value="UniProtKB-EC"/>
</dbReference>
<dbReference type="GO" id="GO:0044210">
    <property type="term" value="P:'de novo' CTP biosynthetic process"/>
    <property type="evidence" value="ECO:0007669"/>
    <property type="project" value="UniProtKB-UniRule"/>
</dbReference>
<dbReference type="GO" id="GO:0006225">
    <property type="term" value="P:UDP biosynthetic process"/>
    <property type="evidence" value="ECO:0007669"/>
    <property type="project" value="TreeGrafter"/>
</dbReference>
<dbReference type="CDD" id="cd04254">
    <property type="entry name" value="AAK_UMPK-PyrH-Ec"/>
    <property type="match status" value="1"/>
</dbReference>
<dbReference type="FunFam" id="3.40.1160.10:FF:000001">
    <property type="entry name" value="Uridylate kinase"/>
    <property type="match status" value="1"/>
</dbReference>
<dbReference type="Gene3D" id="3.40.1160.10">
    <property type="entry name" value="Acetylglutamate kinase-like"/>
    <property type="match status" value="1"/>
</dbReference>
<dbReference type="HAMAP" id="MF_01220_B">
    <property type="entry name" value="PyrH_B"/>
    <property type="match status" value="1"/>
</dbReference>
<dbReference type="InterPro" id="IPR036393">
    <property type="entry name" value="AceGlu_kinase-like_sf"/>
</dbReference>
<dbReference type="InterPro" id="IPR001048">
    <property type="entry name" value="Asp/Glu/Uridylate_kinase"/>
</dbReference>
<dbReference type="InterPro" id="IPR011817">
    <property type="entry name" value="Uridylate_kinase"/>
</dbReference>
<dbReference type="InterPro" id="IPR015963">
    <property type="entry name" value="Uridylate_kinase_bac"/>
</dbReference>
<dbReference type="NCBIfam" id="TIGR02075">
    <property type="entry name" value="pyrH_bact"/>
    <property type="match status" value="1"/>
</dbReference>
<dbReference type="PANTHER" id="PTHR42833">
    <property type="entry name" value="URIDYLATE KINASE"/>
    <property type="match status" value="1"/>
</dbReference>
<dbReference type="PANTHER" id="PTHR42833:SF4">
    <property type="entry name" value="URIDYLATE KINASE PUMPKIN, CHLOROPLASTIC"/>
    <property type="match status" value="1"/>
</dbReference>
<dbReference type="Pfam" id="PF00696">
    <property type="entry name" value="AA_kinase"/>
    <property type="match status" value="1"/>
</dbReference>
<dbReference type="PIRSF" id="PIRSF005650">
    <property type="entry name" value="Uridylate_kin"/>
    <property type="match status" value="1"/>
</dbReference>
<dbReference type="SUPFAM" id="SSF53633">
    <property type="entry name" value="Carbamate kinase-like"/>
    <property type="match status" value="1"/>
</dbReference>
<comment type="function">
    <text evidence="1">Catalyzes the reversible phosphorylation of UMP to UDP.</text>
</comment>
<comment type="catalytic activity">
    <reaction evidence="1">
        <text>UMP + ATP = UDP + ADP</text>
        <dbReference type="Rhea" id="RHEA:24400"/>
        <dbReference type="ChEBI" id="CHEBI:30616"/>
        <dbReference type="ChEBI" id="CHEBI:57865"/>
        <dbReference type="ChEBI" id="CHEBI:58223"/>
        <dbReference type="ChEBI" id="CHEBI:456216"/>
        <dbReference type="EC" id="2.7.4.22"/>
    </reaction>
</comment>
<comment type="activity regulation">
    <text evidence="1">Inhibited by UTP.</text>
</comment>
<comment type="pathway">
    <text evidence="1">Pyrimidine metabolism; CTP biosynthesis via de novo pathway; UDP from UMP (UMPK route): step 1/1.</text>
</comment>
<comment type="subunit">
    <text evidence="1">Homohexamer.</text>
</comment>
<comment type="subcellular location">
    <subcellularLocation>
        <location evidence="1">Cytoplasm</location>
    </subcellularLocation>
</comment>
<comment type="similarity">
    <text evidence="1">Belongs to the UMP kinase family.</text>
</comment>
<evidence type="ECO:0000255" key="1">
    <source>
        <dbReference type="HAMAP-Rule" id="MF_01220"/>
    </source>
</evidence>
<feature type="chain" id="PRO_1000053966" description="Uridylate kinase">
    <location>
        <begin position="1"/>
        <end position="239"/>
    </location>
</feature>
<feature type="binding site" evidence="1">
    <location>
        <begin position="13"/>
        <end position="16"/>
    </location>
    <ligand>
        <name>ATP</name>
        <dbReference type="ChEBI" id="CHEBI:30616"/>
    </ligand>
</feature>
<feature type="binding site" evidence="1">
    <location>
        <position position="55"/>
    </location>
    <ligand>
        <name>UMP</name>
        <dbReference type="ChEBI" id="CHEBI:57865"/>
    </ligand>
</feature>
<feature type="binding site" evidence="1">
    <location>
        <position position="56"/>
    </location>
    <ligand>
        <name>ATP</name>
        <dbReference type="ChEBI" id="CHEBI:30616"/>
    </ligand>
</feature>
<feature type="binding site" evidence="1">
    <location>
        <position position="60"/>
    </location>
    <ligand>
        <name>ATP</name>
        <dbReference type="ChEBI" id="CHEBI:30616"/>
    </ligand>
</feature>
<feature type="binding site" evidence="1">
    <location>
        <position position="75"/>
    </location>
    <ligand>
        <name>UMP</name>
        <dbReference type="ChEBI" id="CHEBI:57865"/>
    </ligand>
</feature>
<feature type="binding site" evidence="1">
    <location>
        <begin position="136"/>
        <end position="143"/>
    </location>
    <ligand>
        <name>UMP</name>
        <dbReference type="ChEBI" id="CHEBI:57865"/>
    </ligand>
</feature>
<feature type="binding site" evidence="1">
    <location>
        <position position="163"/>
    </location>
    <ligand>
        <name>ATP</name>
        <dbReference type="ChEBI" id="CHEBI:30616"/>
    </ligand>
</feature>
<feature type="binding site" evidence="1">
    <location>
        <position position="164"/>
    </location>
    <ligand>
        <name>ATP</name>
        <dbReference type="ChEBI" id="CHEBI:30616"/>
    </ligand>
</feature>
<feature type="binding site" evidence="1">
    <location>
        <position position="169"/>
    </location>
    <ligand>
        <name>ATP</name>
        <dbReference type="ChEBI" id="CHEBI:30616"/>
    </ligand>
</feature>
<feature type="binding site" evidence="1">
    <location>
        <position position="172"/>
    </location>
    <ligand>
        <name>ATP</name>
        <dbReference type="ChEBI" id="CHEBI:30616"/>
    </ligand>
</feature>
<organism>
    <name type="scientific">Neisseria meningitidis serogroup C / serotype 2a (strain ATCC 700532 / DSM 15464 / FAM18)</name>
    <dbReference type="NCBI Taxonomy" id="272831"/>
    <lineage>
        <taxon>Bacteria</taxon>
        <taxon>Pseudomonadati</taxon>
        <taxon>Pseudomonadota</taxon>
        <taxon>Betaproteobacteria</taxon>
        <taxon>Neisseriales</taxon>
        <taxon>Neisseriaceae</taxon>
        <taxon>Neisseria</taxon>
    </lineage>
</organism>
<protein>
    <recommendedName>
        <fullName evidence="1">Uridylate kinase</fullName>
        <shortName evidence="1">UK</shortName>
        <ecNumber evidence="1">2.7.4.22</ecNumber>
    </recommendedName>
    <alternativeName>
        <fullName evidence="1">Uridine monophosphate kinase</fullName>
        <shortName evidence="1">UMP kinase</shortName>
        <shortName evidence="1">UMPK</shortName>
    </alternativeName>
</protein>
<reference key="1">
    <citation type="journal article" date="2007" name="PLoS Genet.">
        <title>Meningococcal genetic variation mechanisms viewed through comparative analysis of serogroup C strain FAM18.</title>
        <authorList>
            <person name="Bentley S.D."/>
            <person name="Vernikos G.S."/>
            <person name="Snyder L.A.S."/>
            <person name="Churcher C."/>
            <person name="Arrowsmith C."/>
            <person name="Chillingworth T."/>
            <person name="Cronin A."/>
            <person name="Davis P.H."/>
            <person name="Holroyd N.E."/>
            <person name="Jagels K."/>
            <person name="Maddison M."/>
            <person name="Moule S."/>
            <person name="Rabbinowitsch E."/>
            <person name="Sharp S."/>
            <person name="Unwin L."/>
            <person name="Whitehead S."/>
            <person name="Quail M.A."/>
            <person name="Achtman M."/>
            <person name="Barrell B.G."/>
            <person name="Saunders N.J."/>
            <person name="Parkhill J."/>
        </authorList>
    </citation>
    <scope>NUCLEOTIDE SEQUENCE [LARGE SCALE GENOMIC DNA]</scope>
    <source>
        <strain>ATCC 700532 / DSM 15464 / FAM18</strain>
    </source>
</reference>
<accession>A1KWH8</accession>
<sequence>MTQQIKYKRVLLKLSGESLMGSDPFGINHDTIVQTVGEIAEVVKMGVQVGIVVGGGNIFRGVSAQAGSMDRATADYMGMMATVMNALALKDAFETLGIKARVQSALSMQQIAETYARPKAIQYLEEGKVVIFAAGTGNPFFTTDTAAALRGAEMNCDVMLKATNVDGVYTADPKKDSSATRYETITFDEALLKNLKVMDATAFALCRERKLNIVVFGIAKEGSLKRVVTGENEGTLVHC</sequence>
<keyword id="KW-0067">ATP-binding</keyword>
<keyword id="KW-0963">Cytoplasm</keyword>
<keyword id="KW-0418">Kinase</keyword>
<keyword id="KW-0547">Nucleotide-binding</keyword>
<keyword id="KW-0665">Pyrimidine biosynthesis</keyword>
<keyword id="KW-0808">Transferase</keyword>
<proteinExistence type="inferred from homology"/>
<name>PYRH_NEIMF</name>
<gene>
    <name evidence="1" type="primary">pyrH</name>
    <name type="ordered locus">NMC2082</name>
</gene>